<comment type="function">
    <text evidence="1">Thiolesterase that catalyzes the hydrolysis of S-D-lactoyl-glutathione to form glutathione and D-lactic acid.</text>
</comment>
<comment type="catalytic activity">
    <reaction evidence="1">
        <text>an S-(2-hydroxyacyl)glutathione + H2O = a 2-hydroxy carboxylate + glutathione + H(+)</text>
        <dbReference type="Rhea" id="RHEA:21864"/>
        <dbReference type="ChEBI" id="CHEBI:15377"/>
        <dbReference type="ChEBI" id="CHEBI:15378"/>
        <dbReference type="ChEBI" id="CHEBI:57925"/>
        <dbReference type="ChEBI" id="CHEBI:58896"/>
        <dbReference type="ChEBI" id="CHEBI:71261"/>
        <dbReference type="EC" id="3.1.2.6"/>
    </reaction>
</comment>
<comment type="cofactor">
    <cofactor evidence="1">
        <name>Zn(2+)</name>
        <dbReference type="ChEBI" id="CHEBI:29105"/>
    </cofactor>
    <text evidence="1">Binds 2 Zn(2+) ions per subunit.</text>
</comment>
<comment type="pathway">
    <text evidence="1">Secondary metabolite metabolism; methylglyoxal degradation; (R)-lactate from methylglyoxal: step 2/2.</text>
</comment>
<comment type="subunit">
    <text evidence="1">Monomer.</text>
</comment>
<comment type="similarity">
    <text evidence="1">Belongs to the metallo-beta-lactamase superfamily. Glyoxalase II family.</text>
</comment>
<sequence length="235" mass="26403">MLKITAIPALQDNYIWAIQQGQEVMIVDPAQADPVFHFLAKNKLNLTTILITHYHQDHIGGIAGLQATYPDLTIYGSHEVAQYVNHIVQAGDHLHLLNSDVEVINSAGHTAQHISFLFAQQYLFCGDALFSAGCGRVFTGDYQAQFNTLQRFKTLPESTLVFPAHEYTLTNLKFAASVLPNNNDIREAQARAETLRAQQQPTLPSTIKQELRINPFLQADNLAEFITLRQQKDQY</sequence>
<accession>Q7VM19</accession>
<reference key="1">
    <citation type="submission" date="2003-06" db="EMBL/GenBank/DDBJ databases">
        <title>The complete genome sequence of Haemophilus ducreyi.</title>
        <authorList>
            <person name="Munson R.S. Jr."/>
            <person name="Ray W.C."/>
            <person name="Mahairas G."/>
            <person name="Sabo P."/>
            <person name="Mungur R."/>
            <person name="Johnson L."/>
            <person name="Nguyen D."/>
            <person name="Wang J."/>
            <person name="Forst C."/>
            <person name="Hood L."/>
        </authorList>
    </citation>
    <scope>NUCLEOTIDE SEQUENCE [LARGE SCALE GENOMIC DNA]</scope>
    <source>
        <strain>35000HP / ATCC 700724</strain>
    </source>
</reference>
<name>GLO2_HAEDU</name>
<gene>
    <name evidence="1" type="primary">gloB</name>
    <name type="ordered locus">HD_1197</name>
</gene>
<organism>
    <name type="scientific">Haemophilus ducreyi (strain 35000HP / ATCC 700724)</name>
    <dbReference type="NCBI Taxonomy" id="233412"/>
    <lineage>
        <taxon>Bacteria</taxon>
        <taxon>Pseudomonadati</taxon>
        <taxon>Pseudomonadota</taxon>
        <taxon>Gammaproteobacteria</taxon>
        <taxon>Pasteurellales</taxon>
        <taxon>Pasteurellaceae</taxon>
        <taxon>Haemophilus</taxon>
    </lineage>
</organism>
<protein>
    <recommendedName>
        <fullName evidence="1">Hydroxyacylglutathione hydrolase</fullName>
        <ecNumber evidence="1">3.1.2.6</ecNumber>
    </recommendedName>
    <alternativeName>
        <fullName evidence="1">Glyoxalase II</fullName>
        <shortName evidence="1">Glx II</shortName>
    </alternativeName>
</protein>
<feature type="chain" id="PRO_0000309647" description="Hydroxyacylglutathione hydrolase">
    <location>
        <begin position="1"/>
        <end position="235"/>
    </location>
</feature>
<feature type="binding site" evidence="1">
    <location>
        <position position="53"/>
    </location>
    <ligand>
        <name>Zn(2+)</name>
        <dbReference type="ChEBI" id="CHEBI:29105"/>
        <label>1</label>
    </ligand>
</feature>
<feature type="binding site" evidence="1">
    <location>
        <position position="55"/>
    </location>
    <ligand>
        <name>Zn(2+)</name>
        <dbReference type="ChEBI" id="CHEBI:29105"/>
        <label>1</label>
    </ligand>
</feature>
<feature type="binding site" evidence="1">
    <location>
        <position position="57"/>
    </location>
    <ligand>
        <name>Zn(2+)</name>
        <dbReference type="ChEBI" id="CHEBI:29105"/>
        <label>2</label>
    </ligand>
</feature>
<feature type="binding site" evidence="1">
    <location>
        <position position="58"/>
    </location>
    <ligand>
        <name>Zn(2+)</name>
        <dbReference type="ChEBI" id="CHEBI:29105"/>
        <label>2</label>
    </ligand>
</feature>
<feature type="binding site" evidence="1">
    <location>
        <position position="109"/>
    </location>
    <ligand>
        <name>Zn(2+)</name>
        <dbReference type="ChEBI" id="CHEBI:29105"/>
        <label>1</label>
    </ligand>
</feature>
<feature type="binding site" evidence="1">
    <location>
        <position position="127"/>
    </location>
    <ligand>
        <name>Zn(2+)</name>
        <dbReference type="ChEBI" id="CHEBI:29105"/>
        <label>1</label>
    </ligand>
</feature>
<feature type="binding site" evidence="1">
    <location>
        <position position="127"/>
    </location>
    <ligand>
        <name>Zn(2+)</name>
        <dbReference type="ChEBI" id="CHEBI:29105"/>
        <label>2</label>
    </ligand>
</feature>
<feature type="binding site" evidence="1">
    <location>
        <position position="165"/>
    </location>
    <ligand>
        <name>Zn(2+)</name>
        <dbReference type="ChEBI" id="CHEBI:29105"/>
        <label>2</label>
    </ligand>
</feature>
<evidence type="ECO:0000255" key="1">
    <source>
        <dbReference type="HAMAP-Rule" id="MF_01374"/>
    </source>
</evidence>
<proteinExistence type="inferred from homology"/>
<keyword id="KW-0378">Hydrolase</keyword>
<keyword id="KW-0479">Metal-binding</keyword>
<keyword id="KW-1185">Reference proteome</keyword>
<keyword id="KW-0862">Zinc</keyword>
<dbReference type="EC" id="3.1.2.6" evidence="1"/>
<dbReference type="EMBL" id="AE017143">
    <property type="protein sequence ID" value="AAP96045.1"/>
    <property type="molecule type" value="Genomic_DNA"/>
</dbReference>
<dbReference type="RefSeq" id="WP_010945094.1">
    <property type="nucleotide sequence ID" value="NC_002940.2"/>
</dbReference>
<dbReference type="SMR" id="Q7VM19"/>
<dbReference type="STRING" id="233412.HD_1197"/>
<dbReference type="KEGG" id="hdu:HD_1197"/>
<dbReference type="eggNOG" id="COG0491">
    <property type="taxonomic scope" value="Bacteria"/>
</dbReference>
<dbReference type="HOGENOM" id="CLU_030571_4_1_6"/>
<dbReference type="OrthoDB" id="9802248at2"/>
<dbReference type="UniPathway" id="UPA00619">
    <property type="reaction ID" value="UER00676"/>
</dbReference>
<dbReference type="Proteomes" id="UP000001022">
    <property type="component" value="Chromosome"/>
</dbReference>
<dbReference type="GO" id="GO:0004416">
    <property type="term" value="F:hydroxyacylglutathione hydrolase activity"/>
    <property type="evidence" value="ECO:0007669"/>
    <property type="project" value="UniProtKB-UniRule"/>
</dbReference>
<dbReference type="GO" id="GO:0046872">
    <property type="term" value="F:metal ion binding"/>
    <property type="evidence" value="ECO:0007669"/>
    <property type="project" value="UniProtKB-KW"/>
</dbReference>
<dbReference type="GO" id="GO:0019243">
    <property type="term" value="P:methylglyoxal catabolic process to D-lactate via S-lactoyl-glutathione"/>
    <property type="evidence" value="ECO:0007669"/>
    <property type="project" value="InterPro"/>
</dbReference>
<dbReference type="CDD" id="cd07723">
    <property type="entry name" value="hydroxyacylglutathione_hydrolase_MBL-fold"/>
    <property type="match status" value="1"/>
</dbReference>
<dbReference type="Gene3D" id="3.60.15.10">
    <property type="entry name" value="Ribonuclease Z/Hydroxyacylglutathione hydrolase-like"/>
    <property type="match status" value="1"/>
</dbReference>
<dbReference type="HAMAP" id="MF_01374">
    <property type="entry name" value="Glyoxalase_2"/>
    <property type="match status" value="1"/>
</dbReference>
<dbReference type="InterPro" id="IPR035680">
    <property type="entry name" value="Clx_II_MBL"/>
</dbReference>
<dbReference type="InterPro" id="IPR050110">
    <property type="entry name" value="Glyoxalase_II_hydrolase"/>
</dbReference>
<dbReference type="InterPro" id="IPR032282">
    <property type="entry name" value="HAGH_C"/>
</dbReference>
<dbReference type="InterPro" id="IPR017782">
    <property type="entry name" value="Hydroxyacylglutathione_Hdrlase"/>
</dbReference>
<dbReference type="InterPro" id="IPR001279">
    <property type="entry name" value="Metallo-B-lactamas"/>
</dbReference>
<dbReference type="InterPro" id="IPR036866">
    <property type="entry name" value="RibonucZ/Hydroxyglut_hydro"/>
</dbReference>
<dbReference type="NCBIfam" id="TIGR03413">
    <property type="entry name" value="GSH_gloB"/>
    <property type="match status" value="1"/>
</dbReference>
<dbReference type="PANTHER" id="PTHR43705">
    <property type="entry name" value="HYDROXYACYLGLUTATHIONE HYDROLASE"/>
    <property type="match status" value="1"/>
</dbReference>
<dbReference type="PANTHER" id="PTHR43705:SF1">
    <property type="entry name" value="HYDROXYACYLGLUTATHIONE HYDROLASE GLOB"/>
    <property type="match status" value="1"/>
</dbReference>
<dbReference type="Pfam" id="PF16123">
    <property type="entry name" value="HAGH_C"/>
    <property type="match status" value="1"/>
</dbReference>
<dbReference type="Pfam" id="PF00753">
    <property type="entry name" value="Lactamase_B"/>
    <property type="match status" value="1"/>
</dbReference>
<dbReference type="PIRSF" id="PIRSF005457">
    <property type="entry name" value="Glx"/>
    <property type="match status" value="1"/>
</dbReference>
<dbReference type="SMART" id="SM00849">
    <property type="entry name" value="Lactamase_B"/>
    <property type="match status" value="1"/>
</dbReference>
<dbReference type="SUPFAM" id="SSF56281">
    <property type="entry name" value="Metallo-hydrolase/oxidoreductase"/>
    <property type="match status" value="1"/>
</dbReference>